<sequence>MTLTGCVDYYEIIAGTKVAVCRNAIDNKTVATAIAATRTVNGNDDPFVVMNVSTIMAKVIQWQRTMPRVAPCYAVKCNDDKVLLRTLADLGMGFDCASKAEIEKVIGLVGPEKIVYANPCKTRGFIAHAEAAGVKRMTFDSVEELTKIKQNHADPSLILRISVSDPTAQCQLGIKFGCDPETVAPKLLRKAADMGMNVIGISFHVGSGCNEPATFRTALEYARGLFDLGISLGLSMTLLDIGGGFPGVDTAHISLDACAAVINPALEELFPLDSCPDVEVIAEPGRYFACAAVSVTTNVIASVKVPASRITEKADDVNRDGYMYYMNDGVYGSFNCKLFDHYQPRGMPLAEHDADEPRFPVCVWGPTCDGLDQVEESSVMPRLYEGDWLYYPDMGAYTSVAASTFNGFDKPKTYYFIDEATLGSIVRKADSAPRG</sequence>
<evidence type="ECO:0000250" key="1">
    <source>
        <dbReference type="UniProtKB" id="P00860"/>
    </source>
</evidence>
<evidence type="ECO:0000250" key="2">
    <source>
        <dbReference type="UniProtKB" id="P07805"/>
    </source>
</evidence>
<evidence type="ECO:0000250" key="3">
    <source>
        <dbReference type="UniProtKB" id="P11926"/>
    </source>
</evidence>
<evidence type="ECO:0000305" key="4"/>
<organism>
    <name type="scientific">Panagrellus redivivus</name>
    <name type="common">Microworm</name>
    <dbReference type="NCBI Taxonomy" id="6233"/>
    <lineage>
        <taxon>Eukaryota</taxon>
        <taxon>Metazoa</taxon>
        <taxon>Ecdysozoa</taxon>
        <taxon>Nematoda</taxon>
        <taxon>Chromadorea</taxon>
        <taxon>Rhabditida</taxon>
        <taxon>Tylenchina</taxon>
        <taxon>Panagrolaimomorpha</taxon>
        <taxon>Panagrolaimoidea</taxon>
        <taxon>Panagrolaimidae</taxon>
        <taxon>Panagrellus</taxon>
    </lineage>
</organism>
<proteinExistence type="evidence at transcript level"/>
<gene>
    <name type="primary">ODC</name>
</gene>
<name>DCOR_PANRE</name>
<feature type="chain" id="PRO_0000149902" description="Ornithine decarboxylase">
    <location>
        <begin position="1"/>
        <end position="435"/>
    </location>
</feature>
<feature type="active site" description="Proton donor; shared with dimeric partner" evidence="3">
    <location>
        <position position="368"/>
    </location>
</feature>
<feature type="binding site" evidence="3">
    <location>
        <position position="207"/>
    </location>
    <ligand>
        <name>pyridoxal 5'-phosphate</name>
        <dbReference type="ChEBI" id="CHEBI:597326"/>
    </ligand>
</feature>
<feature type="binding site" evidence="3">
    <location>
        <position position="244"/>
    </location>
    <ligand>
        <name>pyridoxal 5'-phosphate</name>
        <dbReference type="ChEBI" id="CHEBI:597326"/>
    </ligand>
</feature>
<feature type="binding site" evidence="3">
    <location>
        <begin position="283"/>
        <end position="286"/>
    </location>
    <ligand>
        <name>pyridoxal 5'-phosphate</name>
        <dbReference type="ChEBI" id="CHEBI:597326"/>
    </ligand>
</feature>
<feature type="binding site" description="in other chain" evidence="2">
    <location>
        <begin position="339"/>
        <end position="340"/>
    </location>
    <ligand>
        <name>substrate</name>
        <note>ligand shared between dimeric partners</note>
    </ligand>
</feature>
<feature type="binding site" evidence="2">
    <location>
        <position position="369"/>
    </location>
    <ligand>
        <name>substrate</name>
        <note>ligand shared between dimeric partners</note>
    </ligand>
</feature>
<feature type="binding site" evidence="3">
    <location>
        <position position="397"/>
    </location>
    <ligand>
        <name>pyridoxal 5'-phosphate</name>
        <dbReference type="ChEBI" id="CHEBI:597326"/>
    </ligand>
</feature>
<feature type="site" description="Stacks against the aromatic ring of pyridoxal phosphate and stabilizes reaction intermediates" evidence="1">
    <location>
        <position position="204"/>
    </location>
</feature>
<feature type="modified residue" description="N6-(pyridoxal phosphate)lysine" evidence="3">
    <location>
        <position position="76"/>
    </location>
</feature>
<accession>P49725</accession>
<reference key="1">
    <citation type="journal article" date="1995" name="Biochem. J.">
        <title>Molecular cloning and characterization of ornithine decarboxylase cDNA of the nematode Panagrellus redivivus.</title>
        <authorList>
            <person name="von Besser H."/>
            <person name="Niemann G."/>
            <person name="Domdey B."/>
            <person name="Walter R.D."/>
        </authorList>
    </citation>
    <scope>NUCLEOTIDE SEQUENCE [MRNA]</scope>
</reference>
<protein>
    <recommendedName>
        <fullName>Ornithine decarboxylase</fullName>
        <shortName>ODC</shortName>
        <ecNumber>4.1.1.17</ecNumber>
    </recommendedName>
</protein>
<keyword id="KW-0210">Decarboxylase</keyword>
<keyword id="KW-0456">Lyase</keyword>
<keyword id="KW-0620">Polyamine biosynthesis</keyword>
<keyword id="KW-0663">Pyridoxal phosphate</keyword>
<keyword id="KW-1185">Reference proteome</keyword>
<comment type="function">
    <text evidence="3">Catalyzes the first and rate-limiting step of polyamine biosynthesis that converts ornithine into putrescine, which is the precursor for the polyamines, spermidine and spermine. Polyamines are essential for cell proliferation and are implicated in cellular processes, ranging from DNA replication to apoptosis.</text>
</comment>
<comment type="catalytic activity">
    <reaction evidence="3">
        <text>L-ornithine + H(+) = putrescine + CO2</text>
        <dbReference type="Rhea" id="RHEA:22964"/>
        <dbReference type="ChEBI" id="CHEBI:15378"/>
        <dbReference type="ChEBI" id="CHEBI:16526"/>
        <dbReference type="ChEBI" id="CHEBI:46911"/>
        <dbReference type="ChEBI" id="CHEBI:326268"/>
        <dbReference type="EC" id="4.1.1.17"/>
    </reaction>
</comment>
<comment type="cofactor">
    <cofactor evidence="3">
        <name>pyridoxal 5'-phosphate</name>
        <dbReference type="ChEBI" id="CHEBI:597326"/>
    </cofactor>
</comment>
<comment type="activity regulation">
    <text evidence="3">Inhibited by antizyme (AZ) in response to polyamine levels. AZ inhibits the assembly of the functional homodimer by binding to ODC monomers and targeting them for ubiquitin-independent proteolytic destruction by the 26S proteasome.</text>
</comment>
<comment type="pathway">
    <text>Amine and polyamine biosynthesis; putrescine biosynthesis via L-ornithine pathway; putrescine from L-ornithine: step 1/1.</text>
</comment>
<comment type="subunit">
    <text evidence="3">Homodimer. Only the dimer is catalytically active, as the active sites are constructed of residues from both monomers.</text>
</comment>
<comment type="similarity">
    <text evidence="4">Belongs to the Orn/Lys/Arg decarboxylase class-II family.</text>
</comment>
<dbReference type="EC" id="4.1.1.17"/>
<dbReference type="EMBL" id="X82199">
    <property type="protein sequence ID" value="CAA57683.1"/>
    <property type="molecule type" value="mRNA"/>
</dbReference>
<dbReference type="EMBL" id="X95719">
    <property type="protein sequence ID" value="CAA65024.1"/>
    <property type="molecule type" value="Genomic_DNA"/>
</dbReference>
<dbReference type="PIR" id="S55347">
    <property type="entry name" value="S52784"/>
</dbReference>
<dbReference type="SMR" id="P49725"/>
<dbReference type="SABIO-RK" id="P49725"/>
<dbReference type="UniPathway" id="UPA00535">
    <property type="reaction ID" value="UER00288"/>
</dbReference>
<dbReference type="Proteomes" id="UP000492821">
    <property type="component" value="Unplaced"/>
</dbReference>
<dbReference type="GO" id="GO:0005737">
    <property type="term" value="C:cytoplasm"/>
    <property type="evidence" value="ECO:0007669"/>
    <property type="project" value="TreeGrafter"/>
</dbReference>
<dbReference type="GO" id="GO:0004586">
    <property type="term" value="F:ornithine decarboxylase activity"/>
    <property type="evidence" value="ECO:0007669"/>
    <property type="project" value="UniProtKB-EC"/>
</dbReference>
<dbReference type="GO" id="GO:0033387">
    <property type="term" value="P:putrescine biosynthetic process from arginine, via ornithine"/>
    <property type="evidence" value="ECO:0007669"/>
    <property type="project" value="UniProtKB-UniPathway"/>
</dbReference>
<dbReference type="CDD" id="cd00622">
    <property type="entry name" value="PLPDE_III_ODC"/>
    <property type="match status" value="1"/>
</dbReference>
<dbReference type="FunFam" id="3.20.20.10:FF:000005">
    <property type="entry name" value="Ornithine decarboxylase"/>
    <property type="match status" value="1"/>
</dbReference>
<dbReference type="Gene3D" id="3.20.20.10">
    <property type="entry name" value="Alanine racemase"/>
    <property type="match status" value="1"/>
</dbReference>
<dbReference type="Gene3D" id="2.40.37.10">
    <property type="entry name" value="Lyase, Ornithine Decarboxylase, Chain A, domain 1"/>
    <property type="match status" value="1"/>
</dbReference>
<dbReference type="InterPro" id="IPR009006">
    <property type="entry name" value="Ala_racemase/Decarboxylase_C"/>
</dbReference>
<dbReference type="InterPro" id="IPR022643">
    <property type="entry name" value="De-COase2_C"/>
</dbReference>
<dbReference type="InterPro" id="IPR022644">
    <property type="entry name" value="De-COase2_N"/>
</dbReference>
<dbReference type="InterPro" id="IPR022653">
    <property type="entry name" value="De-COase2_pyr-phos_BS"/>
</dbReference>
<dbReference type="InterPro" id="IPR000183">
    <property type="entry name" value="Orn/DAP/Arg_de-COase"/>
</dbReference>
<dbReference type="InterPro" id="IPR002433">
    <property type="entry name" value="Orn_de-COase"/>
</dbReference>
<dbReference type="InterPro" id="IPR029066">
    <property type="entry name" value="PLP-binding_barrel"/>
</dbReference>
<dbReference type="PANTHER" id="PTHR11482">
    <property type="entry name" value="ARGININE/DIAMINOPIMELATE/ORNITHINE DECARBOXYLASE"/>
    <property type="match status" value="1"/>
</dbReference>
<dbReference type="PANTHER" id="PTHR11482:SF6">
    <property type="entry name" value="ORNITHINE DECARBOXYLASE 1-RELATED"/>
    <property type="match status" value="1"/>
</dbReference>
<dbReference type="Pfam" id="PF02784">
    <property type="entry name" value="Orn_Arg_deC_N"/>
    <property type="match status" value="1"/>
</dbReference>
<dbReference type="Pfam" id="PF00278">
    <property type="entry name" value="Orn_DAP_Arg_deC"/>
    <property type="match status" value="1"/>
</dbReference>
<dbReference type="PRINTS" id="PR01179">
    <property type="entry name" value="ODADCRBXLASE"/>
</dbReference>
<dbReference type="PRINTS" id="PR01182">
    <property type="entry name" value="ORNDCRBXLASE"/>
</dbReference>
<dbReference type="SUPFAM" id="SSF50621">
    <property type="entry name" value="Alanine racemase C-terminal domain-like"/>
    <property type="match status" value="1"/>
</dbReference>
<dbReference type="SUPFAM" id="SSF51419">
    <property type="entry name" value="PLP-binding barrel"/>
    <property type="match status" value="1"/>
</dbReference>
<dbReference type="PROSITE" id="PS00878">
    <property type="entry name" value="ODR_DC_2_1"/>
    <property type="match status" value="1"/>
</dbReference>
<dbReference type="PROSITE" id="PS00879">
    <property type="entry name" value="ODR_DC_2_2"/>
    <property type="match status" value="1"/>
</dbReference>